<sequence>MGYLFTSESVSEGHPDKVADQISDAVLDKLLAFDPSSKVACETLVTTGQVVLAGEVKTKAYVDLQRIAREVINRIGYTKSEYMFEGNSCGVFSAIHEQSADINRGVEREDPMNQGAGDQGMMFGYATNETENYMPLSLDLAHKLLMVLAEIRREGKVMTYLRPDAKSQVTIEYDDNGKPVRIDTIVVSTQHDEFVTPADSSKEAQLKADEEMLAKIRQDVIEILMPRVIAGIHNEEVLALFNDRIVYHVNPTGKFVIGGPHGDTGLTGRKIIVDTYGGKGAHGGGAFSGKDPSKVDRSAAYAARHIAKNMVAAGVADEMLVQVSYAIGVARPINIYVNTYGRSNVKLSDGEIAKKIDELFDLRPKAIEERLKLRNPIYEETASYGHMGREPKVVTKTYESMYHEAKTLEVELFTWEKLDYVDKIKEAFGL</sequence>
<dbReference type="EC" id="2.5.1.6" evidence="1"/>
<dbReference type="EMBL" id="CP000139">
    <property type="protein sequence ID" value="ABR38875.1"/>
    <property type="molecule type" value="Genomic_DNA"/>
</dbReference>
<dbReference type="RefSeq" id="WP_008666460.1">
    <property type="nucleotide sequence ID" value="NZ_JANSWM010000113.1"/>
</dbReference>
<dbReference type="SMR" id="A6KZL1"/>
<dbReference type="STRING" id="435590.BVU_1184"/>
<dbReference type="PaxDb" id="435590-BVU_1184"/>
<dbReference type="GeneID" id="5302150"/>
<dbReference type="KEGG" id="bvu:BVU_1184"/>
<dbReference type="eggNOG" id="COG0192">
    <property type="taxonomic scope" value="Bacteria"/>
</dbReference>
<dbReference type="HOGENOM" id="CLU_041802_1_1_10"/>
<dbReference type="BioCyc" id="BVUL435590:G1G59-1231-MONOMER"/>
<dbReference type="UniPathway" id="UPA00315">
    <property type="reaction ID" value="UER00080"/>
</dbReference>
<dbReference type="Proteomes" id="UP000002861">
    <property type="component" value="Chromosome"/>
</dbReference>
<dbReference type="GO" id="GO:0005737">
    <property type="term" value="C:cytoplasm"/>
    <property type="evidence" value="ECO:0007669"/>
    <property type="project" value="UniProtKB-SubCell"/>
</dbReference>
<dbReference type="GO" id="GO:0005524">
    <property type="term" value="F:ATP binding"/>
    <property type="evidence" value="ECO:0007669"/>
    <property type="project" value="UniProtKB-UniRule"/>
</dbReference>
<dbReference type="GO" id="GO:0000287">
    <property type="term" value="F:magnesium ion binding"/>
    <property type="evidence" value="ECO:0007669"/>
    <property type="project" value="UniProtKB-UniRule"/>
</dbReference>
<dbReference type="GO" id="GO:0004478">
    <property type="term" value="F:methionine adenosyltransferase activity"/>
    <property type="evidence" value="ECO:0007669"/>
    <property type="project" value="UniProtKB-UniRule"/>
</dbReference>
<dbReference type="GO" id="GO:0006730">
    <property type="term" value="P:one-carbon metabolic process"/>
    <property type="evidence" value="ECO:0007669"/>
    <property type="project" value="UniProtKB-KW"/>
</dbReference>
<dbReference type="GO" id="GO:0006556">
    <property type="term" value="P:S-adenosylmethionine biosynthetic process"/>
    <property type="evidence" value="ECO:0007669"/>
    <property type="project" value="UniProtKB-UniRule"/>
</dbReference>
<dbReference type="CDD" id="cd18079">
    <property type="entry name" value="S-AdoMet_synt"/>
    <property type="match status" value="1"/>
</dbReference>
<dbReference type="FunFam" id="3.30.300.10:FF:000020">
    <property type="entry name" value="S-adenosylmethionine synthase"/>
    <property type="match status" value="1"/>
</dbReference>
<dbReference type="Gene3D" id="3.30.300.10">
    <property type="match status" value="3"/>
</dbReference>
<dbReference type="HAMAP" id="MF_00086">
    <property type="entry name" value="S_AdoMet_synth1"/>
    <property type="match status" value="1"/>
</dbReference>
<dbReference type="InterPro" id="IPR022631">
    <property type="entry name" value="ADOMET_SYNTHASE_CS"/>
</dbReference>
<dbReference type="InterPro" id="IPR022630">
    <property type="entry name" value="S-AdoMet_synt_C"/>
</dbReference>
<dbReference type="InterPro" id="IPR022629">
    <property type="entry name" value="S-AdoMet_synt_central"/>
</dbReference>
<dbReference type="InterPro" id="IPR022628">
    <property type="entry name" value="S-AdoMet_synt_N"/>
</dbReference>
<dbReference type="InterPro" id="IPR002133">
    <property type="entry name" value="S-AdoMet_synthetase"/>
</dbReference>
<dbReference type="InterPro" id="IPR022636">
    <property type="entry name" value="S-AdoMet_synthetase_sfam"/>
</dbReference>
<dbReference type="NCBIfam" id="TIGR01034">
    <property type="entry name" value="metK"/>
    <property type="match status" value="1"/>
</dbReference>
<dbReference type="PANTHER" id="PTHR11964">
    <property type="entry name" value="S-ADENOSYLMETHIONINE SYNTHETASE"/>
    <property type="match status" value="1"/>
</dbReference>
<dbReference type="Pfam" id="PF02773">
    <property type="entry name" value="S-AdoMet_synt_C"/>
    <property type="match status" value="1"/>
</dbReference>
<dbReference type="Pfam" id="PF02772">
    <property type="entry name" value="S-AdoMet_synt_M"/>
    <property type="match status" value="1"/>
</dbReference>
<dbReference type="Pfam" id="PF00438">
    <property type="entry name" value="S-AdoMet_synt_N"/>
    <property type="match status" value="1"/>
</dbReference>
<dbReference type="PIRSF" id="PIRSF000497">
    <property type="entry name" value="MAT"/>
    <property type="match status" value="1"/>
</dbReference>
<dbReference type="SUPFAM" id="SSF55973">
    <property type="entry name" value="S-adenosylmethionine synthetase"/>
    <property type="match status" value="3"/>
</dbReference>
<dbReference type="PROSITE" id="PS00376">
    <property type="entry name" value="ADOMET_SYNTHASE_1"/>
    <property type="match status" value="1"/>
</dbReference>
<dbReference type="PROSITE" id="PS00377">
    <property type="entry name" value="ADOMET_SYNTHASE_2"/>
    <property type="match status" value="1"/>
</dbReference>
<comment type="function">
    <text evidence="1">Catalyzes the formation of S-adenosylmethionine (AdoMet) from methionine and ATP. The overall synthetic reaction is composed of two sequential steps, AdoMet formation and the subsequent tripolyphosphate hydrolysis which occurs prior to release of AdoMet from the enzyme.</text>
</comment>
<comment type="catalytic activity">
    <reaction evidence="1">
        <text>L-methionine + ATP + H2O = S-adenosyl-L-methionine + phosphate + diphosphate</text>
        <dbReference type="Rhea" id="RHEA:21080"/>
        <dbReference type="ChEBI" id="CHEBI:15377"/>
        <dbReference type="ChEBI" id="CHEBI:30616"/>
        <dbReference type="ChEBI" id="CHEBI:33019"/>
        <dbReference type="ChEBI" id="CHEBI:43474"/>
        <dbReference type="ChEBI" id="CHEBI:57844"/>
        <dbReference type="ChEBI" id="CHEBI:59789"/>
        <dbReference type="EC" id="2.5.1.6"/>
    </reaction>
</comment>
<comment type="cofactor">
    <cofactor evidence="1">
        <name>Mg(2+)</name>
        <dbReference type="ChEBI" id="CHEBI:18420"/>
    </cofactor>
    <text evidence="1">Binds 2 divalent ions per subunit.</text>
</comment>
<comment type="cofactor">
    <cofactor evidence="1">
        <name>K(+)</name>
        <dbReference type="ChEBI" id="CHEBI:29103"/>
    </cofactor>
    <text evidence="1">Binds 1 potassium ion per subunit.</text>
</comment>
<comment type="pathway">
    <text evidence="1">Amino-acid biosynthesis; S-adenosyl-L-methionine biosynthesis; S-adenosyl-L-methionine from L-methionine: step 1/1.</text>
</comment>
<comment type="subunit">
    <text evidence="1">Homotetramer; dimer of dimers.</text>
</comment>
<comment type="subcellular location">
    <subcellularLocation>
        <location evidence="1">Cytoplasm</location>
    </subcellularLocation>
</comment>
<comment type="similarity">
    <text evidence="1">Belongs to the AdoMet synthase family.</text>
</comment>
<reference key="1">
    <citation type="journal article" date="2007" name="PLoS Biol.">
        <title>Evolution of symbiotic bacteria in the distal human intestine.</title>
        <authorList>
            <person name="Xu J."/>
            <person name="Mahowald M.A."/>
            <person name="Ley R.E."/>
            <person name="Lozupone C.A."/>
            <person name="Hamady M."/>
            <person name="Martens E.C."/>
            <person name="Henrissat B."/>
            <person name="Coutinho P.M."/>
            <person name="Minx P."/>
            <person name="Latreille P."/>
            <person name="Cordum H."/>
            <person name="Van Brunt A."/>
            <person name="Kim K."/>
            <person name="Fulton R.S."/>
            <person name="Fulton L.A."/>
            <person name="Clifton S.W."/>
            <person name="Wilson R.K."/>
            <person name="Knight R.D."/>
            <person name="Gordon J.I."/>
        </authorList>
    </citation>
    <scope>NUCLEOTIDE SEQUENCE [LARGE SCALE GENOMIC DNA]</scope>
    <source>
        <strain>ATCC 8482 / DSM 1447 / JCM 5826 / CCUG 4940 / NBRC 14291 / NCTC 11154</strain>
    </source>
</reference>
<gene>
    <name evidence="1" type="primary">metK</name>
    <name type="ordered locus">BVU_1184</name>
</gene>
<organism>
    <name type="scientific">Phocaeicola vulgatus (strain ATCC 8482 / DSM 1447 / JCM 5826 / CCUG 4940 / NBRC 14291 / NCTC 11154)</name>
    <name type="common">Bacteroides vulgatus</name>
    <dbReference type="NCBI Taxonomy" id="435590"/>
    <lineage>
        <taxon>Bacteria</taxon>
        <taxon>Pseudomonadati</taxon>
        <taxon>Bacteroidota</taxon>
        <taxon>Bacteroidia</taxon>
        <taxon>Bacteroidales</taxon>
        <taxon>Bacteroidaceae</taxon>
        <taxon>Phocaeicola</taxon>
    </lineage>
</organism>
<accession>A6KZL1</accession>
<protein>
    <recommendedName>
        <fullName evidence="1">S-adenosylmethionine synthase</fullName>
        <shortName evidence="1">AdoMet synthase</shortName>
        <ecNumber evidence="1">2.5.1.6</ecNumber>
    </recommendedName>
    <alternativeName>
        <fullName evidence="1">MAT</fullName>
    </alternativeName>
    <alternativeName>
        <fullName evidence="1">Methionine adenosyltransferase</fullName>
    </alternativeName>
</protein>
<feature type="chain" id="PRO_0000302894" description="S-adenosylmethionine synthase">
    <location>
        <begin position="1"/>
        <end position="430"/>
    </location>
</feature>
<feature type="region of interest" description="Flexible loop" evidence="1">
    <location>
        <begin position="98"/>
        <end position="108"/>
    </location>
</feature>
<feature type="binding site" description="in other chain" evidence="1">
    <location>
        <position position="14"/>
    </location>
    <ligand>
        <name>ATP</name>
        <dbReference type="ChEBI" id="CHEBI:30616"/>
        <note>ligand shared between two neighboring subunits</note>
    </ligand>
</feature>
<feature type="binding site" evidence="1">
    <location>
        <position position="16"/>
    </location>
    <ligand>
        <name>Mg(2+)</name>
        <dbReference type="ChEBI" id="CHEBI:18420"/>
    </ligand>
</feature>
<feature type="binding site" evidence="1">
    <location>
        <position position="42"/>
    </location>
    <ligand>
        <name>K(+)</name>
        <dbReference type="ChEBI" id="CHEBI:29103"/>
    </ligand>
</feature>
<feature type="binding site" description="in other chain" evidence="1">
    <location>
        <position position="55"/>
    </location>
    <ligand>
        <name>L-methionine</name>
        <dbReference type="ChEBI" id="CHEBI:57844"/>
        <note>ligand shared between two neighboring subunits</note>
    </ligand>
</feature>
<feature type="binding site" description="in other chain" evidence="1">
    <location>
        <position position="98"/>
    </location>
    <ligand>
        <name>L-methionine</name>
        <dbReference type="ChEBI" id="CHEBI:57844"/>
        <note>ligand shared between two neighboring subunits</note>
    </ligand>
</feature>
<feature type="binding site" description="in other chain" evidence="1">
    <location>
        <begin position="164"/>
        <end position="166"/>
    </location>
    <ligand>
        <name>ATP</name>
        <dbReference type="ChEBI" id="CHEBI:30616"/>
        <note>ligand shared between two neighboring subunits</note>
    </ligand>
</feature>
<feature type="binding site" description="in other chain" evidence="1">
    <location>
        <begin position="254"/>
        <end position="255"/>
    </location>
    <ligand>
        <name>ATP</name>
        <dbReference type="ChEBI" id="CHEBI:30616"/>
        <note>ligand shared between two neighboring subunits</note>
    </ligand>
</feature>
<feature type="binding site" evidence="1">
    <location>
        <position position="263"/>
    </location>
    <ligand>
        <name>ATP</name>
        <dbReference type="ChEBI" id="CHEBI:30616"/>
        <note>ligand shared between two neighboring subunits</note>
    </ligand>
</feature>
<feature type="binding site" evidence="1">
    <location>
        <position position="263"/>
    </location>
    <ligand>
        <name>L-methionine</name>
        <dbReference type="ChEBI" id="CHEBI:57844"/>
        <note>ligand shared between two neighboring subunits</note>
    </ligand>
</feature>
<feature type="binding site" description="in other chain" evidence="1">
    <location>
        <begin position="269"/>
        <end position="270"/>
    </location>
    <ligand>
        <name>ATP</name>
        <dbReference type="ChEBI" id="CHEBI:30616"/>
        <note>ligand shared between two neighboring subunits</note>
    </ligand>
</feature>
<feature type="binding site" evidence="1">
    <location>
        <position position="286"/>
    </location>
    <ligand>
        <name>ATP</name>
        <dbReference type="ChEBI" id="CHEBI:30616"/>
        <note>ligand shared between two neighboring subunits</note>
    </ligand>
</feature>
<feature type="binding site" evidence="1">
    <location>
        <position position="290"/>
    </location>
    <ligand>
        <name>ATP</name>
        <dbReference type="ChEBI" id="CHEBI:30616"/>
        <note>ligand shared between two neighboring subunits</note>
    </ligand>
</feature>
<feature type="binding site" description="in other chain" evidence="1">
    <location>
        <position position="294"/>
    </location>
    <ligand>
        <name>L-methionine</name>
        <dbReference type="ChEBI" id="CHEBI:57844"/>
        <note>ligand shared between two neighboring subunits</note>
    </ligand>
</feature>
<proteinExistence type="inferred from homology"/>
<evidence type="ECO:0000255" key="1">
    <source>
        <dbReference type="HAMAP-Rule" id="MF_00086"/>
    </source>
</evidence>
<keyword id="KW-0067">ATP-binding</keyword>
<keyword id="KW-0963">Cytoplasm</keyword>
<keyword id="KW-0460">Magnesium</keyword>
<keyword id="KW-0479">Metal-binding</keyword>
<keyword id="KW-0547">Nucleotide-binding</keyword>
<keyword id="KW-0554">One-carbon metabolism</keyword>
<keyword id="KW-0630">Potassium</keyword>
<keyword id="KW-0808">Transferase</keyword>
<name>METK_PHOV8</name>